<name>PSAJ_PAUCH</name>
<keyword id="KW-0472">Membrane</keyword>
<keyword id="KW-0994">Organellar chromatophore</keyword>
<keyword id="KW-0602">Photosynthesis</keyword>
<keyword id="KW-0603">Photosystem I</keyword>
<keyword id="KW-0934">Plastid</keyword>
<keyword id="KW-0793">Thylakoid</keyword>
<keyword id="KW-0812">Transmembrane</keyword>
<keyword id="KW-1133">Transmembrane helix</keyword>
<comment type="function">
    <text evidence="2">May help in the organization of the PsaE and PsaF subunits.</text>
</comment>
<comment type="subcellular location">
    <subcellularLocation>
        <location evidence="1">Plastid</location>
        <location evidence="1">Organellar chromatophore thylakoid membrane</location>
        <topology evidence="2">Single-pass membrane protein</topology>
    </subcellularLocation>
</comment>
<comment type="similarity">
    <text evidence="2">Belongs to the PsaJ family.</text>
</comment>
<accession>B1X5F5</accession>
<dbReference type="EMBL" id="CP000815">
    <property type="protein sequence ID" value="ACB43174.1"/>
    <property type="molecule type" value="Genomic_DNA"/>
</dbReference>
<dbReference type="RefSeq" id="YP_002049384.1">
    <property type="nucleotide sequence ID" value="NC_011087.1"/>
</dbReference>
<dbReference type="SMR" id="B1X5F5"/>
<dbReference type="GeneID" id="6482005"/>
<dbReference type="GO" id="GO:0070118">
    <property type="term" value="C:organellar chromatophore thylakoid membrane"/>
    <property type="evidence" value="ECO:0007669"/>
    <property type="project" value="UniProtKB-SubCell"/>
</dbReference>
<dbReference type="GO" id="GO:0009522">
    <property type="term" value="C:photosystem I"/>
    <property type="evidence" value="ECO:0007669"/>
    <property type="project" value="UniProtKB-KW"/>
</dbReference>
<dbReference type="GO" id="GO:0009536">
    <property type="term" value="C:plastid"/>
    <property type="evidence" value="ECO:0007669"/>
    <property type="project" value="UniProtKB-KW"/>
</dbReference>
<dbReference type="GO" id="GO:0015979">
    <property type="term" value="P:photosynthesis"/>
    <property type="evidence" value="ECO:0007669"/>
    <property type="project" value="UniProtKB-UniRule"/>
</dbReference>
<dbReference type="Gene3D" id="1.20.5.510">
    <property type="entry name" value="Single helix bin"/>
    <property type="match status" value="1"/>
</dbReference>
<dbReference type="HAMAP" id="MF_00522">
    <property type="entry name" value="PSI_PsaJ"/>
    <property type="match status" value="1"/>
</dbReference>
<dbReference type="InterPro" id="IPR002615">
    <property type="entry name" value="PSI_PsaJ"/>
</dbReference>
<dbReference type="InterPro" id="IPR036062">
    <property type="entry name" value="PSI_PsaJ_sf"/>
</dbReference>
<dbReference type="NCBIfam" id="NF002743">
    <property type="entry name" value="PRK02733.1"/>
    <property type="match status" value="1"/>
</dbReference>
<dbReference type="PANTHER" id="PTHR36082">
    <property type="match status" value="1"/>
</dbReference>
<dbReference type="PANTHER" id="PTHR36082:SF2">
    <property type="entry name" value="PHOTOSYSTEM I REACTION CENTER SUBUNIT IX"/>
    <property type="match status" value="1"/>
</dbReference>
<dbReference type="Pfam" id="PF01701">
    <property type="entry name" value="PSI_PsaJ"/>
    <property type="match status" value="1"/>
</dbReference>
<dbReference type="SUPFAM" id="SSF81544">
    <property type="entry name" value="Subunit IX of photosystem I reaction centre, PsaJ"/>
    <property type="match status" value="1"/>
</dbReference>
<gene>
    <name evidence="2" type="primary">psaJ</name>
    <name type="ordered locus">PCC_0759</name>
</gene>
<geneLocation type="organellar chromatophore"/>
<organism>
    <name type="scientific">Paulinella chromatophora</name>
    <dbReference type="NCBI Taxonomy" id="39717"/>
    <lineage>
        <taxon>Eukaryota</taxon>
        <taxon>Sar</taxon>
        <taxon>Rhizaria</taxon>
        <taxon>Cercozoa</taxon>
        <taxon>Imbricatea</taxon>
        <taxon>Silicofilosea</taxon>
        <taxon>Euglyphida</taxon>
        <taxon>Paulinellidae</taxon>
        <taxon>Paulinella</taxon>
    </lineage>
</organism>
<reference key="1">
    <citation type="journal article" date="2008" name="Curr. Biol.">
        <title>Chromatophore genome sequence of Paulinella sheds light on acquisition of photosynthesis by eukaryotes.</title>
        <authorList>
            <person name="Nowack E.C.M."/>
            <person name="Melkonian M."/>
            <person name="Gloeckner G."/>
        </authorList>
    </citation>
    <scope>NUCLEOTIDE SEQUENCE [LARGE SCALE GENOMIC DNA]</scope>
</reference>
<evidence type="ECO:0000250" key="1"/>
<evidence type="ECO:0000255" key="2">
    <source>
        <dbReference type="HAMAP-Rule" id="MF_00522"/>
    </source>
</evidence>
<feature type="chain" id="PRO_0000354171" description="Photosystem I reaction center subunit IX">
    <location>
        <begin position="1"/>
        <end position="38"/>
    </location>
</feature>
<feature type="transmembrane region" description="Helical" evidence="2">
    <location>
        <begin position="4"/>
        <end position="24"/>
    </location>
</feature>
<sequence length="38" mass="4478">MKKFLTTAPVFSAIWFTLTAGIMIEFNRFYPDLLFHPL</sequence>
<proteinExistence type="inferred from homology"/>
<protein>
    <recommendedName>
        <fullName evidence="2">Photosystem I reaction center subunit IX</fullName>
    </recommendedName>
</protein>